<protein>
    <recommendedName>
        <fullName>Amygdalin beta-glucosidase II'</fullName>
        <ecNumber>3.2.1.117</ecNumber>
    </recommendedName>
    <alternativeName>
        <fullName>Amygdalin hydrolase isozyme II'</fullName>
        <shortName>AH II'</shortName>
    </alternativeName>
</protein>
<organism>
    <name type="scientific">Prunus serotina</name>
    <name type="common">Black cherry</name>
    <dbReference type="NCBI Taxonomy" id="23207"/>
    <lineage>
        <taxon>Eukaryota</taxon>
        <taxon>Viridiplantae</taxon>
        <taxon>Streptophyta</taxon>
        <taxon>Embryophyta</taxon>
        <taxon>Tracheophyta</taxon>
        <taxon>Spermatophyta</taxon>
        <taxon>Magnoliopsida</taxon>
        <taxon>eudicotyledons</taxon>
        <taxon>Gunneridae</taxon>
        <taxon>Pentapetalae</taxon>
        <taxon>rosids</taxon>
        <taxon>fabids</taxon>
        <taxon>Rosales</taxon>
        <taxon>Rosaceae</taxon>
        <taxon>Amygdaloideae</taxon>
        <taxon>Amygdaleae</taxon>
        <taxon>Prunus</taxon>
    </lineage>
</organism>
<accession>P29262</accession>
<name>AH4_PRUSE</name>
<sequence>TDPPIHIASLXRS</sequence>
<dbReference type="EC" id="3.2.1.117"/>
<dbReference type="CAZy" id="GH1">
    <property type="family name" value="Glycoside Hydrolase Family 1"/>
</dbReference>
<dbReference type="GO" id="GO:0047668">
    <property type="term" value="F:amygdalin beta-glucosidase activity"/>
    <property type="evidence" value="ECO:0007669"/>
    <property type="project" value="UniProtKB-EC"/>
</dbReference>
<comment type="catalytic activity">
    <reaction>
        <text>(R)-amygdalin + H2O = (R)-prunasin + D-glucose</text>
        <dbReference type="Rhea" id="RHEA:14177"/>
        <dbReference type="ChEBI" id="CHEBI:4167"/>
        <dbReference type="ChEBI" id="CHEBI:15377"/>
        <dbReference type="ChEBI" id="CHEBI:17019"/>
        <dbReference type="ChEBI" id="CHEBI:17396"/>
        <dbReference type="EC" id="3.2.1.117"/>
    </reaction>
</comment>
<comment type="subunit">
    <text>Monomer.</text>
</comment>
<comment type="developmental stage">
    <text>Absent from maturing black cherry fruits until 6 weeks after flowering. Then, concomitant with cotyledon development, the level of enzyme increases with specificity for embryonal tissues.</text>
</comment>
<comment type="PTM">
    <text>Glycosylated.</text>
</comment>
<feature type="chain" id="PRO_0000064501" description="Amygdalin beta-glucosidase II'">
    <location>
        <begin position="1"/>
        <end position="13" status="greater than"/>
    </location>
</feature>
<feature type="non-terminal residue">
    <location>
        <position position="13"/>
    </location>
</feature>
<keyword id="KW-0903">Direct protein sequencing</keyword>
<keyword id="KW-0325">Glycoprotein</keyword>
<keyword id="KW-0326">Glycosidase</keyword>
<keyword id="KW-0378">Hydrolase</keyword>
<reference key="1">
    <citation type="journal article" date="1992" name="Plant Physiol.">
        <title>Prunus serotina amygdalin hydrolase and prunasin hydrolase: purification, N-terminal sequencing, and antibody production.</title>
        <authorList>
            <person name="Li C.P."/>
            <person name="Swain E."/>
            <person name="Poulton J.E."/>
        </authorList>
    </citation>
    <scope>PROTEIN SEQUENCE</scope>
    <source>
        <tissue>Seed</tissue>
    </source>
</reference>
<proteinExistence type="evidence at protein level"/>